<feature type="chain" id="PRO_1000047566" description="Glutamate racemase">
    <location>
        <begin position="1"/>
        <end position="264"/>
    </location>
</feature>
<feature type="active site" description="Proton donor/acceptor" evidence="1">
    <location>
        <position position="72"/>
    </location>
</feature>
<feature type="active site" description="Proton donor/acceptor" evidence="1">
    <location>
        <position position="183"/>
    </location>
</feature>
<feature type="binding site" evidence="1">
    <location>
        <begin position="9"/>
        <end position="10"/>
    </location>
    <ligand>
        <name>substrate</name>
    </ligand>
</feature>
<feature type="binding site" evidence="1">
    <location>
        <begin position="41"/>
        <end position="42"/>
    </location>
    <ligand>
        <name>substrate</name>
    </ligand>
</feature>
<feature type="binding site" evidence="1">
    <location>
        <begin position="73"/>
        <end position="74"/>
    </location>
    <ligand>
        <name>substrate</name>
    </ligand>
</feature>
<feature type="binding site" evidence="1">
    <location>
        <begin position="184"/>
        <end position="185"/>
    </location>
    <ligand>
        <name>substrate</name>
    </ligand>
</feature>
<keyword id="KW-0133">Cell shape</keyword>
<keyword id="KW-0961">Cell wall biogenesis/degradation</keyword>
<keyword id="KW-0413">Isomerase</keyword>
<keyword id="KW-0573">Peptidoglycan synthesis</keyword>
<keyword id="KW-1185">Reference proteome</keyword>
<protein>
    <recommendedName>
        <fullName evidence="1">Glutamate racemase</fullName>
        <ecNumber evidence="1">5.1.1.3</ecNumber>
    </recommendedName>
</protein>
<name>MURI_GEOKA</name>
<gene>
    <name evidence="1" type="primary">murI</name>
    <name type="ordered locus">GK2668</name>
</gene>
<organism>
    <name type="scientific">Geobacillus kaustophilus (strain HTA426)</name>
    <dbReference type="NCBI Taxonomy" id="235909"/>
    <lineage>
        <taxon>Bacteria</taxon>
        <taxon>Bacillati</taxon>
        <taxon>Bacillota</taxon>
        <taxon>Bacilli</taxon>
        <taxon>Bacillales</taxon>
        <taxon>Anoxybacillaceae</taxon>
        <taxon>Geobacillus</taxon>
        <taxon>Geobacillus thermoleovorans group</taxon>
    </lineage>
</organism>
<proteinExistence type="inferred from homology"/>
<comment type="function">
    <text evidence="1">Provides the (R)-glutamate required for cell wall biosynthesis.</text>
</comment>
<comment type="catalytic activity">
    <reaction evidence="1">
        <text>L-glutamate = D-glutamate</text>
        <dbReference type="Rhea" id="RHEA:12813"/>
        <dbReference type="ChEBI" id="CHEBI:29985"/>
        <dbReference type="ChEBI" id="CHEBI:29986"/>
        <dbReference type="EC" id="5.1.1.3"/>
    </reaction>
</comment>
<comment type="pathway">
    <text evidence="1">Cell wall biogenesis; peptidoglycan biosynthesis.</text>
</comment>
<comment type="similarity">
    <text evidence="1">Belongs to the aspartate/glutamate racemases family.</text>
</comment>
<sequence length="264" mass="29105">MERAIGVIDSGVGGLTVAKEIMRQLPKEQIIYLGDTARCPYGPRPVEEVRRFTWQMIDYLRQYPLKMLVIACNTATAVALDDVRAKLDIPVLGVIHPGARAALKATRRGHIGVIGTIGTIRSRAYEKALQSINPRVQVESLACPKFVPLVESGDFEGQEAMAIVAESLAPLRPLPIDVLILGCTHYPLLAPLIRTYMGKRVKLICSGGETAREVSAILHHSQLLYTGEREPEHLFFTTGPKELFEKISGKWFGKPIGTVEAIRL</sequence>
<reference key="1">
    <citation type="journal article" date="2004" name="Nucleic Acids Res.">
        <title>Thermoadaptation trait revealed by the genome sequence of thermophilic Geobacillus kaustophilus.</title>
        <authorList>
            <person name="Takami H."/>
            <person name="Takaki Y."/>
            <person name="Chee G.-J."/>
            <person name="Nishi S."/>
            <person name="Shimamura S."/>
            <person name="Suzuki H."/>
            <person name="Matsui S."/>
            <person name="Uchiyama I."/>
        </authorList>
    </citation>
    <scope>NUCLEOTIDE SEQUENCE [LARGE SCALE GENOMIC DNA]</scope>
    <source>
        <strain>HTA426</strain>
    </source>
</reference>
<dbReference type="EC" id="5.1.1.3" evidence="1"/>
<dbReference type="EMBL" id="BA000043">
    <property type="protein sequence ID" value="BAD76953.1"/>
    <property type="molecule type" value="Genomic_DNA"/>
</dbReference>
<dbReference type="SMR" id="Q5KWI3"/>
<dbReference type="STRING" id="235909.GK2668"/>
<dbReference type="KEGG" id="gka:GK2668"/>
<dbReference type="eggNOG" id="COG0796">
    <property type="taxonomic scope" value="Bacteria"/>
</dbReference>
<dbReference type="HOGENOM" id="CLU_052344_0_2_9"/>
<dbReference type="UniPathway" id="UPA00219"/>
<dbReference type="Proteomes" id="UP000001172">
    <property type="component" value="Chromosome"/>
</dbReference>
<dbReference type="GO" id="GO:0008881">
    <property type="term" value="F:glutamate racemase activity"/>
    <property type="evidence" value="ECO:0007669"/>
    <property type="project" value="UniProtKB-UniRule"/>
</dbReference>
<dbReference type="GO" id="GO:0071555">
    <property type="term" value="P:cell wall organization"/>
    <property type="evidence" value="ECO:0007669"/>
    <property type="project" value="UniProtKB-KW"/>
</dbReference>
<dbReference type="GO" id="GO:0009252">
    <property type="term" value="P:peptidoglycan biosynthetic process"/>
    <property type="evidence" value="ECO:0007669"/>
    <property type="project" value="UniProtKB-UniRule"/>
</dbReference>
<dbReference type="GO" id="GO:0008360">
    <property type="term" value="P:regulation of cell shape"/>
    <property type="evidence" value="ECO:0007669"/>
    <property type="project" value="UniProtKB-KW"/>
</dbReference>
<dbReference type="FunFam" id="3.40.50.1860:FF:000002">
    <property type="entry name" value="Glutamate racemase"/>
    <property type="match status" value="1"/>
</dbReference>
<dbReference type="Gene3D" id="3.40.50.1860">
    <property type="match status" value="2"/>
</dbReference>
<dbReference type="HAMAP" id="MF_00258">
    <property type="entry name" value="Glu_racemase"/>
    <property type="match status" value="1"/>
</dbReference>
<dbReference type="InterPro" id="IPR015942">
    <property type="entry name" value="Asp/Glu/hydantoin_racemase"/>
</dbReference>
<dbReference type="InterPro" id="IPR001920">
    <property type="entry name" value="Asp/Glu_race"/>
</dbReference>
<dbReference type="InterPro" id="IPR018187">
    <property type="entry name" value="Asp/Glu_racemase_AS_1"/>
</dbReference>
<dbReference type="InterPro" id="IPR033134">
    <property type="entry name" value="Asp/Glu_racemase_AS_2"/>
</dbReference>
<dbReference type="InterPro" id="IPR004391">
    <property type="entry name" value="Glu_race"/>
</dbReference>
<dbReference type="NCBIfam" id="TIGR00067">
    <property type="entry name" value="glut_race"/>
    <property type="match status" value="1"/>
</dbReference>
<dbReference type="NCBIfam" id="NF002035">
    <property type="entry name" value="PRK00865.1-3"/>
    <property type="match status" value="1"/>
</dbReference>
<dbReference type="PANTHER" id="PTHR21198">
    <property type="entry name" value="GLUTAMATE RACEMASE"/>
    <property type="match status" value="1"/>
</dbReference>
<dbReference type="PANTHER" id="PTHR21198:SF2">
    <property type="entry name" value="GLUTAMATE RACEMASE"/>
    <property type="match status" value="1"/>
</dbReference>
<dbReference type="Pfam" id="PF01177">
    <property type="entry name" value="Asp_Glu_race"/>
    <property type="match status" value="1"/>
</dbReference>
<dbReference type="SUPFAM" id="SSF53681">
    <property type="entry name" value="Aspartate/glutamate racemase"/>
    <property type="match status" value="2"/>
</dbReference>
<dbReference type="PROSITE" id="PS00923">
    <property type="entry name" value="ASP_GLU_RACEMASE_1"/>
    <property type="match status" value="1"/>
</dbReference>
<dbReference type="PROSITE" id="PS00924">
    <property type="entry name" value="ASP_GLU_RACEMASE_2"/>
    <property type="match status" value="1"/>
</dbReference>
<evidence type="ECO:0000255" key="1">
    <source>
        <dbReference type="HAMAP-Rule" id="MF_00258"/>
    </source>
</evidence>
<accession>Q5KWI3</accession>